<protein>
    <recommendedName>
        <fullName evidence="2">Eukaryotic translation initiation factor 3 subunit D</fullName>
        <shortName evidence="2">eIF3d</shortName>
    </recommendedName>
    <alternativeName>
        <fullName evidence="2">Eukaryotic translation initiation factor 3 subunit 7</fullName>
    </alternativeName>
</protein>
<sequence length="552" mass="64178">MAKFQAPVINDNPLGWGPCAVPDQFKDMPYQPFSKGDRLGKVADWTGATYQDKRYTNKYSSQFGGGSQYAYFHDEDETSFQLVDTTKMQKTAYQRNRLRFAQRNLRRDKDRRNMLQFNMQTLPKSAKQKERDRLRLQKKFQKQFGVRQKWDQKSQAQLKPRDSSVEVRSDWEVKEEMDFPRLMKMRYMEVSDPLDIECCGALEFYDKAFDRITTRNERPLKSIKRIFHTVTTTDDPVIRKLAKTQGNVFATDAILATLMCCTRSVNSWDIVVQRVGSKIFFDKRDNSDFDLLTVSETANEPPQDDVNSLNSPRNLAMEATYINHNFSQQCLRMGKEKHTFPNPNPFIEDDVDKNEVASVAYRYRRWKLGDDIDLVVRCEHDGFMTGANGEVSFVNIKTLNEWDSRYCNGVDWRQKLDSQRGAVIATELKNNSYKLARWTCCALLAGSEYLKLGYVSRCHVKDSTRHVVLGTQQFKPNEFANQINLSMENAWGILRCVVDICMKLDEGKYLILKDPNKQVIRIYSLPDGTFSSDEEDDDDDEEEEEEVEEEES</sequence>
<organism>
    <name type="scientific">Xenopus tropicalis</name>
    <name type="common">Western clawed frog</name>
    <name type="synonym">Silurana tropicalis</name>
    <dbReference type="NCBI Taxonomy" id="8364"/>
    <lineage>
        <taxon>Eukaryota</taxon>
        <taxon>Metazoa</taxon>
        <taxon>Chordata</taxon>
        <taxon>Craniata</taxon>
        <taxon>Vertebrata</taxon>
        <taxon>Euteleostomi</taxon>
        <taxon>Amphibia</taxon>
        <taxon>Batrachia</taxon>
        <taxon>Anura</taxon>
        <taxon>Pipoidea</taxon>
        <taxon>Pipidae</taxon>
        <taxon>Xenopodinae</taxon>
        <taxon>Xenopus</taxon>
        <taxon>Silurana</taxon>
    </lineage>
</organism>
<dbReference type="EMBL" id="CR761224">
    <property type="protein sequence ID" value="CAJ81760.1"/>
    <property type="molecule type" value="mRNA"/>
</dbReference>
<dbReference type="EMBL" id="BC061267">
    <property type="protein sequence ID" value="AAH61267.1"/>
    <property type="molecule type" value="mRNA"/>
</dbReference>
<dbReference type="RefSeq" id="NP_989075.1">
    <property type="nucleotide sequence ID" value="NM_203744.1"/>
</dbReference>
<dbReference type="SMR" id="Q6P8G0"/>
<dbReference type="FunCoup" id="Q6P8G0">
    <property type="interactions" value="3192"/>
</dbReference>
<dbReference type="STRING" id="8364.ENSXETP00000031639"/>
<dbReference type="PaxDb" id="8364-ENSXETP00000056971"/>
<dbReference type="GeneID" id="394672"/>
<dbReference type="KEGG" id="xtr:394672"/>
<dbReference type="AGR" id="Xenbase:XB-GENE-942853"/>
<dbReference type="CTD" id="8664"/>
<dbReference type="Xenbase" id="XB-GENE-942853">
    <property type="gene designation" value="eif3d"/>
</dbReference>
<dbReference type="eggNOG" id="KOG2479">
    <property type="taxonomic scope" value="Eukaryota"/>
</dbReference>
<dbReference type="HOGENOM" id="CLU_024521_2_0_1"/>
<dbReference type="InParanoid" id="Q6P8G0"/>
<dbReference type="OMA" id="FMDKRDN"/>
<dbReference type="OrthoDB" id="16538at2759"/>
<dbReference type="PhylomeDB" id="Q6P8G0"/>
<dbReference type="TreeFam" id="TF101519"/>
<dbReference type="Reactome" id="R-XTR-156827">
    <property type="pathway name" value="L13a-mediated translational silencing of Ceruloplasmin expression"/>
</dbReference>
<dbReference type="Reactome" id="R-XTR-72689">
    <property type="pathway name" value="Formation of a pool of free 40S subunits"/>
</dbReference>
<dbReference type="Reactome" id="R-XTR-72695">
    <property type="pathway name" value="Formation of the ternary complex, and subsequently, the 43S complex"/>
</dbReference>
<dbReference type="Reactome" id="R-XTR-72702">
    <property type="pathway name" value="Ribosomal scanning and start codon recognition"/>
</dbReference>
<dbReference type="Proteomes" id="UP000008143">
    <property type="component" value="Chromosome 4"/>
</dbReference>
<dbReference type="Bgee" id="ENSXETG00000027259">
    <property type="expression patterns" value="Expressed in male organism and 28 other cell types or tissues"/>
</dbReference>
<dbReference type="GO" id="GO:0016282">
    <property type="term" value="C:eukaryotic 43S preinitiation complex"/>
    <property type="evidence" value="ECO:0007669"/>
    <property type="project" value="UniProtKB-UniRule"/>
</dbReference>
<dbReference type="GO" id="GO:0033290">
    <property type="term" value="C:eukaryotic 48S preinitiation complex"/>
    <property type="evidence" value="ECO:0007669"/>
    <property type="project" value="UniProtKB-UniRule"/>
</dbReference>
<dbReference type="GO" id="GO:0005852">
    <property type="term" value="C:eukaryotic translation initiation factor 3 complex"/>
    <property type="evidence" value="ECO:0000250"/>
    <property type="project" value="UniProtKB"/>
</dbReference>
<dbReference type="GO" id="GO:0098808">
    <property type="term" value="F:mRNA cap binding"/>
    <property type="evidence" value="ECO:0000250"/>
    <property type="project" value="UniProtKB"/>
</dbReference>
<dbReference type="GO" id="GO:0003723">
    <property type="term" value="F:RNA binding"/>
    <property type="evidence" value="ECO:0000250"/>
    <property type="project" value="UniProtKB"/>
</dbReference>
<dbReference type="GO" id="GO:0003743">
    <property type="term" value="F:translation initiation factor activity"/>
    <property type="evidence" value="ECO:0007669"/>
    <property type="project" value="UniProtKB-UniRule"/>
</dbReference>
<dbReference type="GO" id="GO:0002191">
    <property type="term" value="P:cap-dependent translational initiation"/>
    <property type="evidence" value="ECO:0000250"/>
    <property type="project" value="UniProtKB"/>
</dbReference>
<dbReference type="GO" id="GO:0001732">
    <property type="term" value="P:formation of cytoplasmic translation initiation complex"/>
    <property type="evidence" value="ECO:0007669"/>
    <property type="project" value="UniProtKB-UniRule"/>
</dbReference>
<dbReference type="GO" id="GO:0006413">
    <property type="term" value="P:translational initiation"/>
    <property type="evidence" value="ECO:0000250"/>
    <property type="project" value="UniProtKB"/>
</dbReference>
<dbReference type="HAMAP" id="MF_03003">
    <property type="entry name" value="eIF3d"/>
    <property type="match status" value="1"/>
</dbReference>
<dbReference type="InterPro" id="IPR007783">
    <property type="entry name" value="eIF3d"/>
</dbReference>
<dbReference type="PANTHER" id="PTHR12399">
    <property type="entry name" value="EUKARYOTIC TRANSLATION INITIATION FACTOR 3 SUBUNIT 7"/>
    <property type="match status" value="1"/>
</dbReference>
<dbReference type="PANTHER" id="PTHR12399:SF0">
    <property type="entry name" value="EUKARYOTIC TRANSLATION INITIATION FACTOR 3 SUBUNIT D"/>
    <property type="match status" value="1"/>
</dbReference>
<dbReference type="Pfam" id="PF05091">
    <property type="entry name" value="eIF-3_zeta"/>
    <property type="match status" value="1"/>
</dbReference>
<dbReference type="PIRSF" id="PIRSF016281">
    <property type="entry name" value="EIF-3_zeta"/>
    <property type="match status" value="1"/>
</dbReference>
<accession>Q6P8G0</accession>
<name>EIF3D_XENTR</name>
<reference key="1">
    <citation type="submission" date="2006-10" db="EMBL/GenBank/DDBJ databases">
        <authorList>
            <consortium name="Sanger Xenopus tropicalis EST/cDNA project"/>
        </authorList>
    </citation>
    <scope>NUCLEOTIDE SEQUENCE [LARGE SCALE MRNA]</scope>
    <source>
        <tissue>Egg</tissue>
    </source>
</reference>
<reference key="2">
    <citation type="submission" date="2003-11" db="EMBL/GenBank/DDBJ databases">
        <authorList>
            <consortium name="NIH - Xenopus Gene Collection (XGC) project"/>
        </authorList>
    </citation>
    <scope>NUCLEOTIDE SEQUENCE [LARGE SCALE MRNA]</scope>
    <source>
        <tissue>Embryo</tissue>
    </source>
</reference>
<gene>
    <name type="primary">eif3d</name>
    <name type="synonym">eif3s7</name>
    <name type="ORF">TEgg054f16.1</name>
</gene>
<feature type="chain" id="PRO_0000364136" description="Eukaryotic translation initiation factor 3 subunit D">
    <location>
        <begin position="1"/>
        <end position="552"/>
    </location>
</feature>
<feature type="region of interest" description="RNA gate" evidence="1">
    <location>
        <begin position="288"/>
        <end position="302"/>
    </location>
</feature>
<feature type="region of interest" description="Disordered" evidence="3">
    <location>
        <begin position="526"/>
        <end position="552"/>
    </location>
</feature>
<feature type="compositionally biased region" description="Acidic residues" evidence="3">
    <location>
        <begin position="532"/>
        <end position="552"/>
    </location>
</feature>
<keyword id="KW-0963">Cytoplasm</keyword>
<keyword id="KW-0396">Initiation factor</keyword>
<keyword id="KW-0648">Protein biosynthesis</keyword>
<keyword id="KW-1185">Reference proteome</keyword>
<keyword id="KW-0694">RNA-binding</keyword>
<comment type="function">
    <text evidence="2">mRNA cap-binding component of the eukaryotic translation initiation factor 3 (eIF-3) complex, which is involved in protein synthesis of a specialized repertoire of mRNAs and, together with other initiation factors, stimulates binding of mRNA and methionyl-tRNAi to the 40S ribosome. The eIF-3 complex specifically targets and initiates translation of a subset of mRNAs involved in cell proliferation. In the eIF-3 complex, eif3d specifically recognizes and binds the 7-methylguanosine cap of a subset of mRNAs.</text>
</comment>
<comment type="subunit">
    <text evidence="2">Component of the eukaryotic translation initiation factor 3 (eIF-3) complex, which is composed of 13 subunits: eif3a, eif3b, eif3c, eif3d, eif3e, eif3f, eif3g, eif3h, eif3i, eif3j, eif3k, eif3l and eif3m.</text>
</comment>
<comment type="subcellular location">
    <subcellularLocation>
        <location evidence="2">Cytoplasm</location>
    </subcellularLocation>
</comment>
<comment type="domain">
    <text evidence="2">The RNA gate region regulates mRNA cap recognition to prevent promiscuous mRNA-binding before assembly of eif3d into the full eukaryotic translation initiation factor 3 (eIF-3) complex.</text>
</comment>
<comment type="similarity">
    <text evidence="2">Belongs to the eIF-3 subunit D family.</text>
</comment>
<proteinExistence type="evidence at transcript level"/>
<evidence type="ECO:0000250" key="1">
    <source>
        <dbReference type="UniProtKB" id="K7IM66"/>
    </source>
</evidence>
<evidence type="ECO:0000255" key="2">
    <source>
        <dbReference type="HAMAP-Rule" id="MF_03003"/>
    </source>
</evidence>
<evidence type="ECO:0000256" key="3">
    <source>
        <dbReference type="SAM" id="MobiDB-lite"/>
    </source>
</evidence>